<proteinExistence type="evidence at transcript level"/>
<reference key="1">
    <citation type="submission" date="2000-01" db="EMBL/GenBank/DDBJ databases">
        <authorList>
            <person name="Yang Q."/>
            <person name="Tian Y."/>
            <person name="Wallner E.I."/>
            <person name="Kanwar Y.S."/>
        </authorList>
    </citation>
    <scope>NUCLEOTIDE SEQUENCE [MRNA]</scope>
</reference>
<sequence length="456" mass="51002">MIWTRLPLYGHSKPSTGGWQPLRFDGGAFHLKRTAELARALLVLRLCAWPPLVTHGLAFQAWSQRLLGSRLSGALLRASIYGQFVAGETAEEVRGCVQQLQAIGLQPLLAVPTEEEPDSAAKTSEAWYEGNLSAMLHCVDLSRAVADAHGPARNSLMQLKVTALTSPRLCKELSAWIQRPRGSSELRPERLAEAMESGRNLQLSCLSTEQNQHLQASLSRLHRVAQHARAQDVRLLVDAEYTFINPALSLLVAALAMRLDSSEEEGPWVWNTYQAYLKDTHERLERDAKAAHEAGLAFGVKLVRGAYLDKERSVTQLHGKEDCTQPDYEATSRSYSRCLELMLRRVSNHGPRCHLMVASHNEESIRQATRRMWELGIPLDGPVCFGQLLGMCDHVSLALGQAGYMVYKSIPYGCLEEVIPYLIRRAQENRSVLQGARREQALLSQELWRRLLGRTA</sequence>
<accession>Q2V057</accession>
<name>HYPDH_RAT</name>
<dbReference type="EC" id="1.5.5.3" evidence="2"/>
<dbReference type="EC" id="1.5.5.2" evidence="2"/>
<dbReference type="EMBL" id="AF222852">
    <property type="protein sequence ID" value="AAQ13908.1"/>
    <property type="molecule type" value="mRNA"/>
</dbReference>
<dbReference type="SMR" id="Q2V057"/>
<dbReference type="FunCoup" id="Q2V057">
    <property type="interactions" value="54"/>
</dbReference>
<dbReference type="STRING" id="10116.ENSRNOP00000073423"/>
<dbReference type="iPTMnet" id="Q2V057"/>
<dbReference type="PhosphoSitePlus" id="Q2V057"/>
<dbReference type="PaxDb" id="10116-ENSRNOP00000028392"/>
<dbReference type="UCSC" id="RGD:1306761">
    <property type="organism name" value="rat"/>
</dbReference>
<dbReference type="AGR" id="RGD:1306761"/>
<dbReference type="RGD" id="1306761">
    <property type="gene designation" value="Prodh2"/>
</dbReference>
<dbReference type="eggNOG" id="KOG0186">
    <property type="taxonomic scope" value="Eukaryota"/>
</dbReference>
<dbReference type="InParanoid" id="Q2V057"/>
<dbReference type="PhylomeDB" id="Q2V057"/>
<dbReference type="Reactome" id="R-RNO-389661">
    <property type="pathway name" value="Glyoxylate metabolism and glycine degradation"/>
</dbReference>
<dbReference type="Reactome" id="R-RNO-70688">
    <property type="pathway name" value="Proline catabolism"/>
</dbReference>
<dbReference type="PRO" id="PR:Q2V057"/>
<dbReference type="Proteomes" id="UP000002494">
    <property type="component" value="Unplaced"/>
</dbReference>
<dbReference type="GO" id="GO:0005739">
    <property type="term" value="C:mitochondrion"/>
    <property type="evidence" value="ECO:0000318"/>
    <property type="project" value="GO_Central"/>
</dbReference>
<dbReference type="GO" id="GO:0071949">
    <property type="term" value="F:FAD binding"/>
    <property type="evidence" value="ECO:0000318"/>
    <property type="project" value="GO_Central"/>
</dbReference>
<dbReference type="GO" id="GO:0016645">
    <property type="term" value="F:oxidoreductase activity, acting on the CH-NH group of donors"/>
    <property type="evidence" value="ECO:0000250"/>
    <property type="project" value="UniProtKB"/>
</dbReference>
<dbReference type="GO" id="GO:0004657">
    <property type="term" value="F:proline dehydrogenase activity"/>
    <property type="evidence" value="ECO:0000318"/>
    <property type="project" value="GO_Central"/>
</dbReference>
<dbReference type="GO" id="GO:0010133">
    <property type="term" value="P:proline catabolic process to glutamate"/>
    <property type="evidence" value="ECO:0000318"/>
    <property type="project" value="GO_Central"/>
</dbReference>
<dbReference type="Gene3D" id="3.20.20.220">
    <property type="match status" value="1"/>
</dbReference>
<dbReference type="InterPro" id="IPR029041">
    <property type="entry name" value="FAD-linked_oxidoreductase-like"/>
</dbReference>
<dbReference type="InterPro" id="IPR002872">
    <property type="entry name" value="Proline_DH_dom"/>
</dbReference>
<dbReference type="InterPro" id="IPR015659">
    <property type="entry name" value="Proline_oxidase"/>
</dbReference>
<dbReference type="PANTHER" id="PTHR13914:SF29">
    <property type="entry name" value="HYDROXYPROLINE DEHYDROGENASE"/>
    <property type="match status" value="1"/>
</dbReference>
<dbReference type="PANTHER" id="PTHR13914">
    <property type="entry name" value="PROLINE OXIDASE"/>
    <property type="match status" value="1"/>
</dbReference>
<dbReference type="Pfam" id="PF01619">
    <property type="entry name" value="Pro_dh"/>
    <property type="match status" value="1"/>
</dbReference>
<dbReference type="SUPFAM" id="SSF51730">
    <property type="entry name" value="FAD-linked oxidoreductase"/>
    <property type="match status" value="1"/>
</dbReference>
<feature type="chain" id="PRO_0000308625" description="Hydroxyproline dehydrogenase">
    <location>
        <begin position="1"/>
        <end position="456"/>
    </location>
</feature>
<feature type="modified residue" description="N6-acetyllysine" evidence="1">
    <location>
        <position position="310"/>
    </location>
</feature>
<feature type="modified residue" description="N6-acetyllysine" evidence="1">
    <location>
        <position position="320"/>
    </location>
</feature>
<protein>
    <recommendedName>
        <fullName evidence="2">Hydroxyproline dehydrogenase</fullName>
        <shortName evidence="2">HYPDH</shortName>
        <ecNumber evidence="2">1.5.5.3</ecNumber>
    </recommendedName>
    <alternativeName>
        <fullName evidence="2">Probable proline dehydrogenase 2</fullName>
        <ecNumber evidence="2">1.5.5.2</ecNumber>
    </alternativeName>
    <alternativeName>
        <fullName>Probable proline oxidase 2</fullName>
    </alternativeName>
    <alternativeName>
        <fullName>Proline oxidase-like protein</fullName>
    </alternativeName>
</protein>
<keyword id="KW-0007">Acetylation</keyword>
<keyword id="KW-0274">FAD</keyword>
<keyword id="KW-0285">Flavoprotein</keyword>
<keyword id="KW-0560">Oxidoreductase</keyword>
<keyword id="KW-0642">Proline metabolism</keyword>
<keyword id="KW-1185">Reference proteome</keyword>
<comment type="function">
    <text evidence="2">Dehydrogenase that converts trans-4-L-hydroxyproline to delta-1-pyrroline-3-hydroxy-5-carboxylate (Hyp) using ubiquinone-10 as the terminal electron acceptor. Can also use proline as a substrate but with a very much lower efficiency. Does not react with other diastereomers of Hyp: trans-4-D-hydroxyproline and cis-4-L-hydroxyproline. Ubiquininone analogs such as menadione, duroquinone and ubiquinone-1 react more efficiently than oxygen as the terminal electron acceptor during catalysis.</text>
</comment>
<comment type="catalytic activity">
    <reaction evidence="2">
        <text>trans-4-hydroxy-L-proline + a quinone = (3R,5S)-1-pyrroline-3-hydroxy-5-carboxylate + a quinol + H(+)</text>
        <dbReference type="Rhea" id="RHEA:52512"/>
        <dbReference type="ChEBI" id="CHEBI:15378"/>
        <dbReference type="ChEBI" id="CHEBI:24646"/>
        <dbReference type="ChEBI" id="CHEBI:58375"/>
        <dbReference type="ChEBI" id="CHEBI:62612"/>
        <dbReference type="ChEBI" id="CHEBI:132124"/>
        <dbReference type="EC" id="1.5.5.3"/>
    </reaction>
</comment>
<comment type="catalytic activity">
    <reaction evidence="2">
        <text>L-proline + a quinone = (S)-1-pyrroline-5-carboxylate + a quinol + H(+)</text>
        <dbReference type="Rhea" id="RHEA:23784"/>
        <dbReference type="ChEBI" id="CHEBI:15378"/>
        <dbReference type="ChEBI" id="CHEBI:17388"/>
        <dbReference type="ChEBI" id="CHEBI:24646"/>
        <dbReference type="ChEBI" id="CHEBI:60039"/>
        <dbReference type="ChEBI" id="CHEBI:132124"/>
        <dbReference type="EC" id="1.5.5.2"/>
    </reaction>
</comment>
<comment type="cofactor">
    <cofactor evidence="2">
        <name>FAD</name>
        <dbReference type="ChEBI" id="CHEBI:57692"/>
    </cofactor>
</comment>
<comment type="similarity">
    <text evidence="3">Belongs to the proline oxidase family.</text>
</comment>
<gene>
    <name evidence="4" type="primary">Prodh2</name>
    <name evidence="2" type="synonym">Hypdh</name>
</gene>
<organism>
    <name type="scientific">Rattus norvegicus</name>
    <name type="common">Rat</name>
    <dbReference type="NCBI Taxonomy" id="10116"/>
    <lineage>
        <taxon>Eukaryota</taxon>
        <taxon>Metazoa</taxon>
        <taxon>Chordata</taxon>
        <taxon>Craniata</taxon>
        <taxon>Vertebrata</taxon>
        <taxon>Euteleostomi</taxon>
        <taxon>Mammalia</taxon>
        <taxon>Eutheria</taxon>
        <taxon>Euarchontoglires</taxon>
        <taxon>Glires</taxon>
        <taxon>Rodentia</taxon>
        <taxon>Myomorpha</taxon>
        <taxon>Muroidea</taxon>
        <taxon>Muridae</taxon>
        <taxon>Murinae</taxon>
        <taxon>Rattus</taxon>
    </lineage>
</organism>
<evidence type="ECO:0000250" key="1">
    <source>
        <dbReference type="UniProtKB" id="Q8VCZ9"/>
    </source>
</evidence>
<evidence type="ECO:0000250" key="2">
    <source>
        <dbReference type="UniProtKB" id="Q9UF12"/>
    </source>
</evidence>
<evidence type="ECO:0000305" key="3"/>
<evidence type="ECO:0000312" key="4">
    <source>
        <dbReference type="RGD" id="1306761"/>
    </source>
</evidence>